<accession>Q18319</accession>
<accession>Q7JPI9</accession>
<accession>Q7JPJ0</accession>
<accession>Q95QS8</accession>
<comment type="function">
    <text evidence="1">Involved in endosomal protein transport.</text>
</comment>
<comment type="subcellular location">
    <subcellularLocation>
        <location evidence="1">Endosome membrane</location>
        <topology evidence="1">Multi-pass membrane protein</topology>
    </subcellularLocation>
</comment>
<comment type="alternative products">
    <event type="alternative splicing"/>
    <isoform>
        <id>Q18319-1</id>
        <name>a</name>
        <sequence type="displayed"/>
    </isoform>
    <isoform>
        <id>Q18319-2</id>
        <name>b</name>
        <sequence type="described" ref="VSP_003745"/>
    </isoform>
</comment>
<comment type="similarity">
    <text evidence="3">Belongs to the OB-RGRP/VPS55 family.</text>
</comment>
<protein>
    <recommendedName>
        <fullName>Vacuolar protein sorting-associated protein 55 homolog</fullName>
    </recommendedName>
</protein>
<evidence type="ECO:0000250" key="1"/>
<evidence type="ECO:0000255" key="2"/>
<evidence type="ECO:0000305" key="3"/>
<reference key="1">
    <citation type="journal article" date="1998" name="Science">
        <title>Genome sequence of the nematode C. elegans: a platform for investigating biology.</title>
        <authorList>
            <consortium name="The C. elegans sequencing consortium"/>
        </authorList>
    </citation>
    <scope>NUCLEOTIDE SEQUENCE [LARGE SCALE GENOMIC DNA]</scope>
    <scope>ALTERNATIVE SPLICING</scope>
    <source>
        <strain>Bristol N2</strain>
    </source>
</reference>
<organism>
    <name type="scientific">Caenorhabditis elegans</name>
    <dbReference type="NCBI Taxonomy" id="6239"/>
    <lineage>
        <taxon>Eukaryota</taxon>
        <taxon>Metazoa</taxon>
        <taxon>Ecdysozoa</taxon>
        <taxon>Nematoda</taxon>
        <taxon>Chromadorea</taxon>
        <taxon>Rhabditida</taxon>
        <taxon>Rhabditina</taxon>
        <taxon>Rhabditomorpha</taxon>
        <taxon>Rhabditoidea</taxon>
        <taxon>Rhabditidae</taxon>
        <taxon>Peloderinae</taxon>
        <taxon>Caenorhabditis</taxon>
    </lineage>
</organism>
<feature type="chain" id="PRO_0000215200" description="Vacuolar protein sorting-associated protein 55 homolog">
    <location>
        <begin position="1"/>
        <end position="132"/>
    </location>
</feature>
<feature type="transmembrane region" description="Helical" evidence="2">
    <location>
        <begin position="7"/>
        <end position="27"/>
    </location>
</feature>
<feature type="transmembrane region" description="Helical" evidence="2">
    <location>
        <begin position="32"/>
        <end position="52"/>
    </location>
</feature>
<feature type="transmembrane region" description="Helical" evidence="2">
    <location>
        <begin position="68"/>
        <end position="88"/>
    </location>
</feature>
<feature type="transmembrane region" description="Helical" evidence="2">
    <location>
        <begin position="98"/>
        <end position="118"/>
    </location>
</feature>
<feature type="splice variant" id="VSP_003745" description="In isoform b." evidence="3">
    <location>
        <begin position="30"/>
        <end position="31"/>
    </location>
</feature>
<sequence>MGGVRAVAALAFAGVVGLTFLVLGCALPRYGTWTPMFVITFYVLSPVPLLIARRFQEDMTGTNACIELALFITTGIVISAFALPIVLAHAGTIANSACFLVNTGSVIMFGTIIAYFYLHRDDDSGSWSQSLF</sequence>
<keyword id="KW-0025">Alternative splicing</keyword>
<keyword id="KW-0967">Endosome</keyword>
<keyword id="KW-0472">Membrane</keyword>
<keyword id="KW-0653">Protein transport</keyword>
<keyword id="KW-1185">Reference proteome</keyword>
<keyword id="KW-0812">Transmembrane</keyword>
<keyword id="KW-1133">Transmembrane helix</keyword>
<keyword id="KW-0813">Transport</keyword>
<name>VPS55_CAEEL</name>
<proteinExistence type="inferred from homology"/>
<gene>
    <name type="ORF">C30B5.2</name>
</gene>
<dbReference type="EMBL" id="FO080719">
    <property type="protein sequence ID" value="CCD66134.1"/>
    <property type="molecule type" value="Genomic_DNA"/>
</dbReference>
<dbReference type="EMBL" id="FO080719">
    <property type="protein sequence ID" value="CCD66135.1"/>
    <property type="molecule type" value="Genomic_DNA"/>
</dbReference>
<dbReference type="RefSeq" id="NP_001379744.1">
    <molecule id="Q18319-2"/>
    <property type="nucleotide sequence ID" value="NM_001393094.1"/>
</dbReference>
<dbReference type="RefSeq" id="NP_495238.2">
    <molecule id="Q18319-1"/>
    <property type="nucleotide sequence ID" value="NM_062837.7"/>
</dbReference>
<dbReference type="RefSeq" id="NP_495239.2">
    <property type="nucleotide sequence ID" value="NM_062838.4"/>
</dbReference>
<dbReference type="FunCoup" id="Q18319">
    <property type="interactions" value="3192"/>
</dbReference>
<dbReference type="STRING" id="6239.C30B5.2a.1"/>
<dbReference type="PaxDb" id="6239-C30B5.2a"/>
<dbReference type="EnsemblMetazoa" id="C30B5.2a.1">
    <molecule id="Q18319-1"/>
    <property type="protein sequence ID" value="C30B5.2a.1"/>
    <property type="gene ID" value="WBGene00016244"/>
</dbReference>
<dbReference type="EnsemblMetazoa" id="C30B5.2b.1">
    <molecule id="Q18319-2"/>
    <property type="protein sequence ID" value="C30B5.2b.1"/>
    <property type="gene ID" value="WBGene00016244"/>
</dbReference>
<dbReference type="GeneID" id="174028"/>
<dbReference type="KEGG" id="cel:CELE_C30B5.2"/>
<dbReference type="UCSC" id="C30B5.2a">
    <molecule id="Q18319-1"/>
    <property type="organism name" value="c. elegans"/>
</dbReference>
<dbReference type="AGR" id="WB:WBGene00016244"/>
<dbReference type="CTD" id="174028"/>
<dbReference type="WormBase" id="C30B5.2a">
    <molecule id="Q18319-1"/>
    <property type="protein sequence ID" value="CE31889"/>
    <property type="gene ID" value="WBGene00016244"/>
</dbReference>
<dbReference type="WormBase" id="C30B5.2b">
    <molecule id="Q18319-2"/>
    <property type="protein sequence ID" value="CE31890"/>
    <property type="gene ID" value="WBGene00016244"/>
</dbReference>
<dbReference type="eggNOG" id="KOG2174">
    <property type="taxonomic scope" value="Eukaryota"/>
</dbReference>
<dbReference type="GeneTree" id="ENSGT00390000006503"/>
<dbReference type="HOGENOM" id="CLU_134810_2_2_1"/>
<dbReference type="InParanoid" id="Q18319"/>
<dbReference type="OMA" id="ICARCAN"/>
<dbReference type="OrthoDB" id="14246at2759"/>
<dbReference type="PhylomeDB" id="Q18319"/>
<dbReference type="PRO" id="PR:Q18319"/>
<dbReference type="Proteomes" id="UP000001940">
    <property type="component" value="Chromosome II"/>
</dbReference>
<dbReference type="Bgee" id="WBGene00016244">
    <property type="expression patterns" value="Expressed in germ line (C elegans) and 4 other cell types or tissues"/>
</dbReference>
<dbReference type="GO" id="GO:0005768">
    <property type="term" value="C:endosome"/>
    <property type="evidence" value="ECO:0000318"/>
    <property type="project" value="GO_Central"/>
</dbReference>
<dbReference type="GO" id="GO:0010008">
    <property type="term" value="C:endosome membrane"/>
    <property type="evidence" value="ECO:0007669"/>
    <property type="project" value="UniProtKB-SubCell"/>
</dbReference>
<dbReference type="GO" id="GO:0032511">
    <property type="term" value="P:late endosome to vacuole transport via multivesicular body sorting pathway"/>
    <property type="evidence" value="ECO:0000318"/>
    <property type="project" value="GO_Central"/>
</dbReference>
<dbReference type="GO" id="GO:0015031">
    <property type="term" value="P:protein transport"/>
    <property type="evidence" value="ECO:0007669"/>
    <property type="project" value="UniProtKB-KW"/>
</dbReference>
<dbReference type="InterPro" id="IPR007262">
    <property type="entry name" value="Vps55/LEPROT"/>
</dbReference>
<dbReference type="PANTHER" id="PTHR12050">
    <property type="entry name" value="LEPTIN RECEPTOR-RELATED"/>
    <property type="match status" value="1"/>
</dbReference>
<dbReference type="PANTHER" id="PTHR12050:SF0">
    <property type="entry name" value="RH04491P"/>
    <property type="match status" value="1"/>
</dbReference>
<dbReference type="Pfam" id="PF04133">
    <property type="entry name" value="Vps55"/>
    <property type="match status" value="1"/>
</dbReference>